<organism>
    <name type="scientific">Enterobacteria phage T4</name>
    <name type="common">Bacteriophage T4</name>
    <dbReference type="NCBI Taxonomy" id="10665"/>
    <lineage>
        <taxon>Viruses</taxon>
        <taxon>Duplodnaviria</taxon>
        <taxon>Heunggongvirae</taxon>
        <taxon>Uroviricota</taxon>
        <taxon>Caudoviricetes</taxon>
        <taxon>Straboviridae</taxon>
        <taxon>Tevenvirinae</taxon>
        <taxon>Tequatrovirus</taxon>
    </lineage>
</organism>
<proteinExistence type="predicted"/>
<name>Y05I_BPT4</name>
<reference key="1">
    <citation type="submission" date="1996-11" db="EMBL/GenBank/DDBJ databases">
        <title>The 10.7 kb 'nonessential' region of bacteriophage T4 between the genes tk and nrdC: twenty new t4 genes, generally conserved among T-even phages.</title>
        <authorList>
            <person name="Mzhavia N."/>
            <person name="Marusich E."/>
            <person name="Djavakhishvili T."/>
            <person name="Neitzel J."/>
            <person name="Peterson S."/>
            <person name="Awaya M."/>
            <person name="Eidermiller J."/>
            <person name="Canada D."/>
            <person name="Tracy J."/>
            <person name="Gailbreath K."/>
            <person name="Paddison P."/>
            <person name="Anderson B."/>
            <person name="Stidham T."/>
            <person name="Blattner F."/>
            <person name="Kutter E.M."/>
        </authorList>
    </citation>
    <scope>NUCLEOTIDE SEQUENCE [GENOMIC DNA]</scope>
</reference>
<reference key="2">
    <citation type="journal article" date="2003" name="Microbiol. Mol. Biol. Rev.">
        <title>Bacteriophage T4 genome.</title>
        <authorList>
            <person name="Miller E.S."/>
            <person name="Kutter E."/>
            <person name="Mosig G."/>
            <person name="Arisaka F."/>
            <person name="Kunisawa T."/>
            <person name="Ruger W."/>
        </authorList>
    </citation>
    <scope>NUCLEOTIDE SEQUENCE [LARGE SCALE GENOMIC DNA]</scope>
</reference>
<protein>
    <recommendedName>
        <fullName>Uncharacterized 21.1 kDa protein in mobD-ri intergenic region</fullName>
    </recommendedName>
</protein>
<keyword id="KW-1185">Reference proteome</keyword>
<sequence length="181" mass="21177">MMSEAKRLVLEVSPLFGELAIEKVNNMYRLTQEDDMLYFTPSEIVRLTQIEYAYTDKIVSINDEHKIHFYSSCPGFNIKSESMCLSINNWDNFITNIKYFYDSTKRKHNLKWFKKCNAIITNSCNQNDETILNVSKCYEEGDVVSIRQIDDFRSHIITLKKEEAIALKTYLDSVIPTMISK</sequence>
<dbReference type="EMBL" id="U76612">
    <property type="protein sequence ID" value="AAB26969.1"/>
    <property type="molecule type" value="Genomic_DNA"/>
</dbReference>
<dbReference type="EMBL" id="AF158101">
    <property type="protein sequence ID" value="AAD42593.1"/>
    <property type="molecule type" value="Genomic_DNA"/>
</dbReference>
<dbReference type="RefSeq" id="NP_049711.1">
    <property type="nucleotide sequence ID" value="NC_000866.4"/>
</dbReference>
<dbReference type="GeneID" id="1258723"/>
<dbReference type="KEGG" id="vg:1258723"/>
<dbReference type="OrthoDB" id="10309at10239"/>
<dbReference type="Proteomes" id="UP000009087">
    <property type="component" value="Segment"/>
</dbReference>
<dbReference type="Pfam" id="PF24448">
    <property type="entry name" value="T4_y05I_C"/>
    <property type="match status" value="1"/>
</dbReference>
<dbReference type="Pfam" id="PF24449">
    <property type="entry name" value="T4_y05I_N"/>
    <property type="match status" value="1"/>
</dbReference>
<organismHost>
    <name type="scientific">Escherichia coli</name>
    <dbReference type="NCBI Taxonomy" id="562"/>
</organismHost>
<accession>P39240</accession>
<accession>Q96215</accession>
<feature type="chain" id="PRO_0000165126" description="Uncharacterized 21.1 kDa protein in mobD-ri intergenic region">
    <location>
        <begin position="1"/>
        <end position="181"/>
    </location>
</feature>
<gene>
    <name type="primary">y05I</name>
    <name type="synonym">mobD.1</name>
    <name type="synonym">tk.-9</name>
</gene>